<protein>
    <recommendedName>
        <fullName>Meiotically up-regulated gene 87 protein</fullName>
    </recommendedName>
</protein>
<dbReference type="EMBL" id="CU329672">
    <property type="protein sequence ID" value="CAA22495.1"/>
    <property type="molecule type" value="Genomic_DNA"/>
</dbReference>
<dbReference type="PIR" id="T41041">
    <property type="entry name" value="T41041"/>
</dbReference>
<dbReference type="RefSeq" id="NP_588469.1">
    <property type="nucleotide sequence ID" value="NM_001023460.2"/>
</dbReference>
<dbReference type="SMR" id="O94418"/>
<dbReference type="BioGRID" id="275441">
    <property type="interactions" value="36"/>
</dbReference>
<dbReference type="FunCoup" id="O94418">
    <property type="interactions" value="1149"/>
</dbReference>
<dbReference type="STRING" id="284812.O94418"/>
<dbReference type="iPTMnet" id="O94418"/>
<dbReference type="PaxDb" id="4896-SPCC1620.11.1"/>
<dbReference type="EnsemblFungi" id="SPCC1620.11.1">
    <property type="protein sequence ID" value="SPCC1620.11.1:pep"/>
    <property type="gene ID" value="SPCC1620.11"/>
</dbReference>
<dbReference type="GeneID" id="2538861"/>
<dbReference type="KEGG" id="spo:2538861"/>
<dbReference type="PomBase" id="SPCC1620.11"/>
<dbReference type="VEuPathDB" id="FungiDB:SPCC1620.11"/>
<dbReference type="eggNOG" id="KOG2168">
    <property type="taxonomic scope" value="Eukaryota"/>
</dbReference>
<dbReference type="HOGENOM" id="CLU_011846_0_0_1"/>
<dbReference type="InParanoid" id="O94418"/>
<dbReference type="OMA" id="RPHAVHM"/>
<dbReference type="PhylomeDB" id="O94418"/>
<dbReference type="Reactome" id="R-SPO-159227">
    <property type="pathway name" value="Transport of the SLBP independent Mature mRNA"/>
</dbReference>
<dbReference type="Reactome" id="R-SPO-159231">
    <property type="pathway name" value="Transport of Mature mRNA Derived from an Intronless Transcript"/>
</dbReference>
<dbReference type="Reactome" id="R-SPO-159236">
    <property type="pathway name" value="Transport of Mature mRNA derived from an Intron-Containing Transcript"/>
</dbReference>
<dbReference type="Reactome" id="R-SPO-3371453">
    <property type="pathway name" value="Regulation of HSF1-mediated heat shock response"/>
</dbReference>
<dbReference type="Reactome" id="R-SPO-4085377">
    <property type="pathway name" value="SUMOylation of SUMOylation proteins"/>
</dbReference>
<dbReference type="Reactome" id="R-SPO-4551638">
    <property type="pathway name" value="SUMOylation of chromatin organization proteins"/>
</dbReference>
<dbReference type="Reactome" id="R-SPO-4570464">
    <property type="pathway name" value="SUMOylation of RNA binding proteins"/>
</dbReference>
<dbReference type="Reactome" id="R-SPO-5578749">
    <property type="pathway name" value="Transcriptional regulation by small RNAs"/>
</dbReference>
<dbReference type="Reactome" id="R-SPO-9615933">
    <property type="pathway name" value="Postmitotic nuclear pore complex (NPC) reformation"/>
</dbReference>
<dbReference type="PRO" id="PR:O94418"/>
<dbReference type="Proteomes" id="UP000002485">
    <property type="component" value="Chromosome III"/>
</dbReference>
<dbReference type="GO" id="GO:0005829">
    <property type="term" value="C:cytosol"/>
    <property type="evidence" value="ECO:0007005"/>
    <property type="project" value="PomBase"/>
</dbReference>
<dbReference type="GO" id="GO:0005635">
    <property type="term" value="C:nuclear envelope"/>
    <property type="evidence" value="ECO:0007005"/>
    <property type="project" value="PomBase"/>
</dbReference>
<dbReference type="GO" id="GO:0005643">
    <property type="term" value="C:nuclear pore"/>
    <property type="evidence" value="ECO:0000314"/>
    <property type="project" value="PomBase"/>
</dbReference>
<dbReference type="GO" id="GO:0017056">
    <property type="term" value="F:structural constituent of nuclear pore"/>
    <property type="evidence" value="ECO:0000318"/>
    <property type="project" value="GO_Central"/>
</dbReference>
<dbReference type="GO" id="GO:0051321">
    <property type="term" value="P:meiotic cell cycle"/>
    <property type="evidence" value="ECO:0007669"/>
    <property type="project" value="UniProtKB-KW"/>
</dbReference>
<dbReference type="GO" id="GO:0016973">
    <property type="term" value="P:poly(A)+ mRNA export from nucleus"/>
    <property type="evidence" value="ECO:0000315"/>
    <property type="project" value="PomBase"/>
</dbReference>
<dbReference type="GO" id="GO:0006606">
    <property type="term" value="P:protein import into nucleus"/>
    <property type="evidence" value="ECO:0000318"/>
    <property type="project" value="GO_Central"/>
</dbReference>
<dbReference type="InterPro" id="IPR007231">
    <property type="entry name" value="Nucleoporin_int_Nup93/Nic96"/>
</dbReference>
<dbReference type="PANTHER" id="PTHR11225:SF4">
    <property type="entry name" value="NUCLEAR PORE COMPLEX PROTEIN NUP93"/>
    <property type="match status" value="1"/>
</dbReference>
<dbReference type="PANTHER" id="PTHR11225">
    <property type="entry name" value="NUCLEAR PORE COMPLEX PROTEIN NUP93 NUCLEOPORIN NUP93 DEAD EYE PROTEIN"/>
    <property type="match status" value="1"/>
</dbReference>
<dbReference type="Pfam" id="PF04097">
    <property type="entry name" value="Nic96"/>
    <property type="match status" value="1"/>
</dbReference>
<accession>O94418</accession>
<feature type="chain" id="PRO_0000278569" description="Meiotically up-regulated gene 87 protein">
    <location>
        <begin position="1"/>
        <end position="851"/>
    </location>
</feature>
<name>MUG87_SCHPO</name>
<keyword id="KW-0469">Meiosis</keyword>
<keyword id="KW-0539">Nucleus</keyword>
<keyword id="KW-1185">Reference proteome</keyword>
<evidence type="ECO:0000269" key="1">
    <source>
    </source>
</evidence>
<evidence type="ECO:0000269" key="2">
    <source>
    </source>
</evidence>
<evidence type="ECO:0000305" key="3"/>
<proteinExistence type="evidence at protein level"/>
<sequence length="851" mass="97564">MTVASDDSPKEARGIPFLDQKSRKLANELLEPCLPFIQFNLGEIEQRAKHYLNTVPTSKDGNTKAHYLLAGSGINAEQTWKKIESLSLQVRPPTTLELSFTDVDMFLKYHREKNVLNSLEALVQNTQIAFDQYLEEEWRSKAAKSRPSFDNILLENKKRVSFYPFSVQRSQKFASTLKMCLEEEALHGFQSKLVSSFCEVAREFAHDTKSLLLYESWKLLSSVILDKDSVTVFGNKGIISKAFDIETEDGSVNSRFYQRISDCSRKFLEAQFFEVLNKEIAKTPQAALVGGVPSIRNKIRAYLNIRLLRNGVWINPDLEIIQDVPIWAFIFYLLRCGFLKEAVDFTEENRDLFEKVAEKFPFYINAYAKAPNGILPRQLRSQLFSEFNQTIRLQESSDPYKYAVYKIIGRCDLSKTSCPSICSVTEDYIWFQLILSREFTEKSVSAHEFFSLEDVQHILLSYGSDYFTNNGSNPVMYFFLLMLCGLYERAINFLYPYFPTDAVHFAITCAYYGLLRTAPSSSVVSNEPGKIQSMLVETKSGKPSLEFDRLLIDYTQTCQELSPVMSACYLIPMCKIDKYISMCHKSLCSLVLSTRDYVNLLGDIRGDGERTPSFLENHRSLIGLSSVKEYLSKITLTAAKQADDQGLLSDAILLYHLAEDYDAAVTVINRRLGSALLRFLDQFVFPDKLISLTKSMMDVYNRNPSLYAKVDYKNRETTNLLLLTVEAFNAYTNKDYEQALSSLQQLEILPLDPLDSDCETFVVRKLAKEFRFLNENLLQNVPGIVLIAMNSLKELYAKQKSSSFGNDAISVDKLRLYRQKARRIVMYSFLIEYRMPSQILEQLNRCEIEMT</sequence>
<comment type="function">
    <text evidence="1">Has a role in meiosis.</text>
</comment>
<comment type="subcellular location">
    <subcellularLocation>
        <location evidence="2">Nucleus envelope</location>
    </subcellularLocation>
</comment>
<comment type="similarity">
    <text evidence="3">Belongs to the nucleoporin interacting component (NIC) family.</text>
</comment>
<reference key="1">
    <citation type="journal article" date="2002" name="Nature">
        <title>The genome sequence of Schizosaccharomyces pombe.</title>
        <authorList>
            <person name="Wood V."/>
            <person name="Gwilliam R."/>
            <person name="Rajandream M.A."/>
            <person name="Lyne M.H."/>
            <person name="Lyne R."/>
            <person name="Stewart A."/>
            <person name="Sgouros J.G."/>
            <person name="Peat N."/>
            <person name="Hayles J."/>
            <person name="Baker S.G."/>
            <person name="Basham D."/>
            <person name="Bowman S."/>
            <person name="Brooks K."/>
            <person name="Brown D."/>
            <person name="Brown S."/>
            <person name="Chillingworth T."/>
            <person name="Churcher C.M."/>
            <person name="Collins M."/>
            <person name="Connor R."/>
            <person name="Cronin A."/>
            <person name="Davis P."/>
            <person name="Feltwell T."/>
            <person name="Fraser A."/>
            <person name="Gentles S."/>
            <person name="Goble A."/>
            <person name="Hamlin N."/>
            <person name="Harris D.E."/>
            <person name="Hidalgo J."/>
            <person name="Hodgson G."/>
            <person name="Holroyd S."/>
            <person name="Hornsby T."/>
            <person name="Howarth S."/>
            <person name="Huckle E.J."/>
            <person name="Hunt S."/>
            <person name="Jagels K."/>
            <person name="James K.D."/>
            <person name="Jones L."/>
            <person name="Jones M."/>
            <person name="Leather S."/>
            <person name="McDonald S."/>
            <person name="McLean J."/>
            <person name="Mooney P."/>
            <person name="Moule S."/>
            <person name="Mungall K.L."/>
            <person name="Murphy L.D."/>
            <person name="Niblett D."/>
            <person name="Odell C."/>
            <person name="Oliver K."/>
            <person name="O'Neil S."/>
            <person name="Pearson D."/>
            <person name="Quail M.A."/>
            <person name="Rabbinowitsch E."/>
            <person name="Rutherford K.M."/>
            <person name="Rutter S."/>
            <person name="Saunders D."/>
            <person name="Seeger K."/>
            <person name="Sharp S."/>
            <person name="Skelton J."/>
            <person name="Simmonds M.N."/>
            <person name="Squares R."/>
            <person name="Squares S."/>
            <person name="Stevens K."/>
            <person name="Taylor K."/>
            <person name="Taylor R.G."/>
            <person name="Tivey A."/>
            <person name="Walsh S.V."/>
            <person name="Warren T."/>
            <person name="Whitehead S."/>
            <person name="Woodward J.R."/>
            <person name="Volckaert G."/>
            <person name="Aert R."/>
            <person name="Robben J."/>
            <person name="Grymonprez B."/>
            <person name="Weltjens I."/>
            <person name="Vanstreels E."/>
            <person name="Rieger M."/>
            <person name="Schaefer M."/>
            <person name="Mueller-Auer S."/>
            <person name="Gabel C."/>
            <person name="Fuchs M."/>
            <person name="Duesterhoeft A."/>
            <person name="Fritzc C."/>
            <person name="Holzer E."/>
            <person name="Moestl D."/>
            <person name="Hilbert H."/>
            <person name="Borzym K."/>
            <person name="Langer I."/>
            <person name="Beck A."/>
            <person name="Lehrach H."/>
            <person name="Reinhardt R."/>
            <person name="Pohl T.M."/>
            <person name="Eger P."/>
            <person name="Zimmermann W."/>
            <person name="Wedler H."/>
            <person name="Wambutt R."/>
            <person name="Purnelle B."/>
            <person name="Goffeau A."/>
            <person name="Cadieu E."/>
            <person name="Dreano S."/>
            <person name="Gloux S."/>
            <person name="Lelaure V."/>
            <person name="Mottier S."/>
            <person name="Galibert F."/>
            <person name="Aves S.J."/>
            <person name="Xiang Z."/>
            <person name="Hunt C."/>
            <person name="Moore K."/>
            <person name="Hurst S.M."/>
            <person name="Lucas M."/>
            <person name="Rochet M."/>
            <person name="Gaillardin C."/>
            <person name="Tallada V.A."/>
            <person name="Garzon A."/>
            <person name="Thode G."/>
            <person name="Daga R.R."/>
            <person name="Cruzado L."/>
            <person name="Jimenez J."/>
            <person name="Sanchez M."/>
            <person name="del Rey F."/>
            <person name="Benito J."/>
            <person name="Dominguez A."/>
            <person name="Revuelta J.L."/>
            <person name="Moreno S."/>
            <person name="Armstrong J."/>
            <person name="Forsburg S.L."/>
            <person name="Cerutti L."/>
            <person name="Lowe T."/>
            <person name="McCombie W.R."/>
            <person name="Paulsen I."/>
            <person name="Potashkin J."/>
            <person name="Shpakovski G.V."/>
            <person name="Ussery D."/>
            <person name="Barrell B.G."/>
            <person name="Nurse P."/>
        </authorList>
    </citation>
    <scope>NUCLEOTIDE SEQUENCE [LARGE SCALE GENOMIC DNA]</scope>
    <source>
        <strain>972 / ATCC 24843</strain>
    </source>
</reference>
<reference key="2">
    <citation type="journal article" date="2005" name="Curr. Biol.">
        <title>A large-scale screen in S. pombe identifies seven novel genes required for critical meiotic events.</title>
        <authorList>
            <person name="Martin-Castellanos C."/>
            <person name="Blanco M."/>
            <person name="Rozalen A.E."/>
            <person name="Perez-Hidalgo L."/>
            <person name="Garcia A.I."/>
            <person name="Conde F."/>
            <person name="Mata J."/>
            <person name="Ellermeier C."/>
            <person name="Davis L."/>
            <person name="San-Segundo P."/>
            <person name="Smith G.R."/>
            <person name="Moreno S."/>
        </authorList>
    </citation>
    <scope>FUNCTION IN MEIOSIS</scope>
</reference>
<reference key="3">
    <citation type="journal article" date="2006" name="Nat. Biotechnol.">
        <title>ORFeome cloning and global analysis of protein localization in the fission yeast Schizosaccharomyces pombe.</title>
        <authorList>
            <person name="Matsuyama A."/>
            <person name="Arai R."/>
            <person name="Yashiroda Y."/>
            <person name="Shirai A."/>
            <person name="Kamata A."/>
            <person name="Sekido S."/>
            <person name="Kobayashi Y."/>
            <person name="Hashimoto A."/>
            <person name="Hamamoto M."/>
            <person name="Hiraoka Y."/>
            <person name="Horinouchi S."/>
            <person name="Yoshida M."/>
        </authorList>
    </citation>
    <scope>SUBCELLULAR LOCATION [LARGE SCALE ANALYSIS]</scope>
</reference>
<gene>
    <name type="primary">mug87</name>
    <name type="ORF">SPCC1620.11</name>
</gene>
<organism>
    <name type="scientific">Schizosaccharomyces pombe (strain 972 / ATCC 24843)</name>
    <name type="common">Fission yeast</name>
    <dbReference type="NCBI Taxonomy" id="284812"/>
    <lineage>
        <taxon>Eukaryota</taxon>
        <taxon>Fungi</taxon>
        <taxon>Dikarya</taxon>
        <taxon>Ascomycota</taxon>
        <taxon>Taphrinomycotina</taxon>
        <taxon>Schizosaccharomycetes</taxon>
        <taxon>Schizosaccharomycetales</taxon>
        <taxon>Schizosaccharomycetaceae</taxon>
        <taxon>Schizosaccharomyces</taxon>
    </lineage>
</organism>